<comment type="catalytic activity">
    <reaction>
        <text>chorismate + L-glutamine = anthranilate + pyruvate + L-glutamate + H(+)</text>
        <dbReference type="Rhea" id="RHEA:21732"/>
        <dbReference type="ChEBI" id="CHEBI:15361"/>
        <dbReference type="ChEBI" id="CHEBI:15378"/>
        <dbReference type="ChEBI" id="CHEBI:16567"/>
        <dbReference type="ChEBI" id="CHEBI:29748"/>
        <dbReference type="ChEBI" id="CHEBI:29985"/>
        <dbReference type="ChEBI" id="CHEBI:58359"/>
        <dbReference type="EC" id="4.1.3.27"/>
    </reaction>
</comment>
<comment type="cofactor">
    <cofactor evidence="2">
        <name>Mg(2+)</name>
        <dbReference type="ChEBI" id="CHEBI:18420"/>
    </cofactor>
    <text evidence="2">Binds 1 Mg(2+) ion per subunit.</text>
</comment>
<comment type="pathway">
    <text>Amino-acid biosynthesis; L-tryptophan biosynthesis; L-tryptophan from chorismate: step 1/5.</text>
</comment>
<comment type="subunit">
    <text evidence="1">Tetramer of two components I and two components II.</text>
</comment>
<comment type="miscellaneous">
    <text>Component I catalyzes the formation of anthranilate using ammonia rather than glutamine, whereas component II provides glutamine amidotransferase activity.</text>
</comment>
<comment type="similarity">
    <text evidence="3">Belongs to the anthranilate synthase component I family.</text>
</comment>
<comment type="caution">
    <text evidence="3">This is a divergent form of trpE. It is not obvious if it is active in Trp biosynthesis.</text>
</comment>
<proteinExistence type="inferred from homology"/>
<protein>
    <recommendedName>
        <fullName>Anthranilate synthase component I-like protein</fullName>
        <ecNumber>4.1.3.27</ecNumber>
    </recommendedName>
</protein>
<evidence type="ECO:0000250" key="1"/>
<evidence type="ECO:0000250" key="2">
    <source>
        <dbReference type="UniProtKB" id="P00897"/>
    </source>
</evidence>
<evidence type="ECO:0000305" key="3"/>
<accession>P74130</accession>
<dbReference type="EC" id="4.1.3.27"/>
<dbReference type="EMBL" id="BA000022">
    <property type="protein sequence ID" value="BAA18216.1"/>
    <property type="molecule type" value="Genomic_DNA"/>
</dbReference>
<dbReference type="PIR" id="S75655">
    <property type="entry name" value="S75655"/>
</dbReference>
<dbReference type="SMR" id="P74130"/>
<dbReference type="FunCoup" id="P74130">
    <property type="interactions" value="93"/>
</dbReference>
<dbReference type="STRING" id="1148.gene:10499089"/>
<dbReference type="PaxDb" id="1148-1653301"/>
<dbReference type="EnsemblBacteria" id="BAA18216">
    <property type="protein sequence ID" value="BAA18216"/>
    <property type="gene ID" value="BAA18216"/>
</dbReference>
<dbReference type="KEGG" id="syn:slr1979"/>
<dbReference type="eggNOG" id="COG0147">
    <property type="taxonomic scope" value="Bacteria"/>
</dbReference>
<dbReference type="InParanoid" id="P74130"/>
<dbReference type="PhylomeDB" id="P74130"/>
<dbReference type="UniPathway" id="UPA00035">
    <property type="reaction ID" value="UER00040"/>
</dbReference>
<dbReference type="Proteomes" id="UP000001425">
    <property type="component" value="Chromosome"/>
</dbReference>
<dbReference type="GO" id="GO:0004049">
    <property type="term" value="F:anthranilate synthase activity"/>
    <property type="evidence" value="ECO:0007669"/>
    <property type="project" value="UniProtKB-EC"/>
</dbReference>
<dbReference type="GO" id="GO:0046872">
    <property type="term" value="F:metal ion binding"/>
    <property type="evidence" value="ECO:0007669"/>
    <property type="project" value="UniProtKB-KW"/>
</dbReference>
<dbReference type="GO" id="GO:0000162">
    <property type="term" value="P:L-tryptophan biosynthetic process"/>
    <property type="evidence" value="ECO:0007669"/>
    <property type="project" value="UniProtKB-UniPathway"/>
</dbReference>
<dbReference type="Gene3D" id="3.60.120.10">
    <property type="entry name" value="Anthranilate synthase"/>
    <property type="match status" value="1"/>
</dbReference>
<dbReference type="InterPro" id="IPR005801">
    <property type="entry name" value="ADC_synthase"/>
</dbReference>
<dbReference type="InterPro" id="IPR019999">
    <property type="entry name" value="Anth_synth_I-like"/>
</dbReference>
<dbReference type="InterPro" id="IPR006805">
    <property type="entry name" value="Anth_synth_I_N"/>
</dbReference>
<dbReference type="InterPro" id="IPR015890">
    <property type="entry name" value="Chorismate_C"/>
</dbReference>
<dbReference type="InterPro" id="IPR010118">
    <property type="entry name" value="Para-NH2Bz/anthranilate_synth"/>
</dbReference>
<dbReference type="NCBIfam" id="TIGR01824">
    <property type="entry name" value="PabB-clade2"/>
    <property type="match status" value="1"/>
</dbReference>
<dbReference type="NCBIfam" id="NF004610">
    <property type="entry name" value="PRK05940.1"/>
    <property type="match status" value="1"/>
</dbReference>
<dbReference type="PANTHER" id="PTHR42839">
    <property type="entry name" value="ISOCHORISMATE SYNTHASE ENTC"/>
    <property type="match status" value="1"/>
</dbReference>
<dbReference type="PANTHER" id="PTHR42839:SF2">
    <property type="entry name" value="ISOCHORISMATE SYNTHASE ENTC"/>
    <property type="match status" value="1"/>
</dbReference>
<dbReference type="Pfam" id="PF04715">
    <property type="entry name" value="Anth_synt_I_N"/>
    <property type="match status" value="1"/>
</dbReference>
<dbReference type="Pfam" id="PF00425">
    <property type="entry name" value="Chorismate_bind"/>
    <property type="match status" value="1"/>
</dbReference>
<dbReference type="PRINTS" id="PR00095">
    <property type="entry name" value="ANTSNTHASEI"/>
</dbReference>
<dbReference type="SUPFAM" id="SSF56322">
    <property type="entry name" value="ADC synthase"/>
    <property type="match status" value="1"/>
</dbReference>
<feature type="chain" id="PRO_0000154115" description="Anthranilate synthase component I-like protein">
    <location>
        <begin position="1"/>
        <end position="485"/>
    </location>
</feature>
<feature type="binding site" evidence="2">
    <location>
        <position position="69"/>
    </location>
    <ligand>
        <name>L-tryptophan</name>
        <dbReference type="ChEBI" id="CHEBI:57912"/>
    </ligand>
</feature>
<feature type="binding site" evidence="2">
    <location>
        <begin position="271"/>
        <end position="273"/>
    </location>
    <ligand>
        <name>L-tryptophan</name>
        <dbReference type="ChEBI" id="CHEBI:57912"/>
    </ligand>
</feature>
<feature type="binding site" evidence="2">
    <location>
        <begin position="306"/>
        <end position="307"/>
    </location>
    <ligand>
        <name>chorismate</name>
        <dbReference type="ChEBI" id="CHEBI:29748"/>
    </ligand>
</feature>
<feature type="binding site" evidence="2">
    <location>
        <position position="333"/>
    </location>
    <ligand>
        <name>Mg(2+)</name>
        <dbReference type="ChEBI" id="CHEBI:18420"/>
    </ligand>
</feature>
<feature type="binding site" evidence="2">
    <location>
        <position position="441"/>
    </location>
    <ligand>
        <name>chorismate</name>
        <dbReference type="ChEBI" id="CHEBI:29748"/>
    </ligand>
</feature>
<feature type="binding site" evidence="2">
    <location>
        <begin position="455"/>
        <end position="457"/>
    </location>
    <ligand>
        <name>chorismate</name>
        <dbReference type="ChEBI" id="CHEBI:29748"/>
    </ligand>
</feature>
<feature type="binding site" evidence="2">
    <location>
        <position position="457"/>
    </location>
    <ligand>
        <name>chorismate</name>
        <dbReference type="ChEBI" id="CHEBI:29748"/>
    </ligand>
</feature>
<feature type="binding site" evidence="2">
    <location>
        <position position="470"/>
    </location>
    <ligand>
        <name>Mg(2+)</name>
        <dbReference type="ChEBI" id="CHEBI:18420"/>
    </ligand>
</feature>
<sequence length="485" mass="54271">MASIAHCSGGLVGAGNFDFILGGSDPVGRHGLMELQPWHWCCLPLEGRTGSEIFSQLFGHQGIATLLESPYPASPDHPHLGRYSLCAGQPRKGRLWTPKPEEIFSFLNQLCPCNHDVNLTKNIPEHLPFHGGWLGWLGYDTAWAIEKLPYSKADDLPFPVAYWYEPENFVILDHQEQLLWLATTDQEKIKFFQTQLADKINSVSSPQVPPLNLTYTTDQDQYETMVNQAKQYIKAGDIFQANLTLRFIAKTEQKLNSWQVYQHLQTINPSPFASYWRSPWGDVVSCSPERLVKLEGNVAQTRPIAGTRARGKNLAEDEQLLQELLVNTKELAEHIMLVDLERNDLGRVCTWGTVEVDELLAIERYSHVSHLVSNVKGILQPDKTGVDLVKALFPGGTITGCPKIRCLEIIEELEPVRRSLFYGSCGYWDQRGNLDLNILIRTLLFTSGQVTGQVGAGIVADSDPAKEWLESLQKAKALLAALEGL</sequence>
<organism>
    <name type="scientific">Synechocystis sp. (strain ATCC 27184 / PCC 6803 / Kazusa)</name>
    <dbReference type="NCBI Taxonomy" id="1111708"/>
    <lineage>
        <taxon>Bacteria</taxon>
        <taxon>Bacillati</taxon>
        <taxon>Cyanobacteriota</taxon>
        <taxon>Cyanophyceae</taxon>
        <taxon>Synechococcales</taxon>
        <taxon>Merismopediaceae</taxon>
        <taxon>Synechocystis</taxon>
    </lineage>
</organism>
<gene>
    <name type="primary">trpE2</name>
    <name type="ordered locus">slr1979</name>
</gene>
<name>TRE2_SYNY3</name>
<keyword id="KW-0028">Amino-acid biosynthesis</keyword>
<keyword id="KW-0057">Aromatic amino acid biosynthesis</keyword>
<keyword id="KW-0456">Lyase</keyword>
<keyword id="KW-0460">Magnesium</keyword>
<keyword id="KW-0479">Metal-binding</keyword>
<keyword id="KW-1185">Reference proteome</keyword>
<keyword id="KW-0822">Tryptophan biosynthesis</keyword>
<reference key="1">
    <citation type="journal article" date="1996" name="DNA Res.">
        <title>Sequence analysis of the genome of the unicellular cyanobacterium Synechocystis sp. strain PCC6803. II. Sequence determination of the entire genome and assignment of potential protein-coding regions.</title>
        <authorList>
            <person name="Kaneko T."/>
            <person name="Sato S."/>
            <person name="Kotani H."/>
            <person name="Tanaka A."/>
            <person name="Asamizu E."/>
            <person name="Nakamura Y."/>
            <person name="Miyajima N."/>
            <person name="Hirosawa M."/>
            <person name="Sugiura M."/>
            <person name="Sasamoto S."/>
            <person name="Kimura T."/>
            <person name="Hosouchi T."/>
            <person name="Matsuno A."/>
            <person name="Muraki A."/>
            <person name="Nakazaki N."/>
            <person name="Naruo K."/>
            <person name="Okumura S."/>
            <person name="Shimpo S."/>
            <person name="Takeuchi C."/>
            <person name="Wada T."/>
            <person name="Watanabe A."/>
            <person name="Yamada M."/>
            <person name="Yasuda M."/>
            <person name="Tabata S."/>
        </authorList>
    </citation>
    <scope>NUCLEOTIDE SEQUENCE [LARGE SCALE GENOMIC DNA]</scope>
    <source>
        <strain>ATCC 27184 / PCC 6803 / Kazusa</strain>
    </source>
</reference>